<accession>A0JZ01</accession>
<reference key="1">
    <citation type="journal article" date="2013" name="Stand. Genomic Sci.">
        <title>Complete genome sequence of Arthrobacter sp. strain FB24.</title>
        <authorList>
            <person name="Nakatsu C.H."/>
            <person name="Barabote R."/>
            <person name="Thompson S."/>
            <person name="Bruce D."/>
            <person name="Detter C."/>
            <person name="Brettin T."/>
            <person name="Han C."/>
            <person name="Beasley F."/>
            <person name="Chen W."/>
            <person name="Konopka A."/>
            <person name="Xie G."/>
        </authorList>
    </citation>
    <scope>NUCLEOTIDE SEQUENCE [LARGE SCALE GENOMIC DNA]</scope>
    <source>
        <strain>FB24</strain>
    </source>
</reference>
<evidence type="ECO:0000255" key="1">
    <source>
        <dbReference type="HAMAP-Rule" id="MF_01445"/>
    </source>
</evidence>
<protein>
    <recommendedName>
        <fullName evidence="1">tRNA N6-adenosine threonylcarbamoyltransferase</fullName>
        <ecNumber evidence="1">2.3.1.234</ecNumber>
    </recommendedName>
    <alternativeName>
        <fullName evidence="1">N6-L-threonylcarbamoyladenine synthase</fullName>
        <shortName evidence="1">t(6)A synthase</shortName>
    </alternativeName>
    <alternativeName>
        <fullName evidence="1">t(6)A37 threonylcarbamoyladenosine biosynthesis protein TsaD</fullName>
    </alternativeName>
    <alternativeName>
        <fullName evidence="1">tRNA threonylcarbamoyladenosine biosynthesis protein TsaD</fullName>
    </alternativeName>
</protein>
<sequence>MNRTQPLVLGIESSCDETGVGIVRGTALLSNTVSSSMEEHVRFGGVIPEIASRAHLDAFVPTLQEALADAGVQLDDVDAIAVTSGPGLAGALMVGVCAAKALAVATGKPLYAINHLVAHVGVGLLQEENTLPEHLGALLVSGGHTEILRIRSITDDVELLGSTIDDAAGEAYDKVARLLGLGYPGGPAIDKLARTGNAKAIRFPRGLTQPKYMGTADEPGPHRYDWSFSGLKTAVARCVEQFEARGDEVPVADIAAAFQEAVVDVITSKAVLACTENGITELLLGGGVAANSRLRQLTEQRCRAAGIRLTVPPLELCTDNGAMVAALGAQLVMAGIEPSGISFAPDSSMPVTTVSA</sequence>
<proteinExistence type="inferred from homology"/>
<comment type="function">
    <text evidence="1">Required for the formation of a threonylcarbamoyl group on adenosine at position 37 (t(6)A37) in tRNAs that read codons beginning with adenine. Is involved in the transfer of the threonylcarbamoyl moiety of threonylcarbamoyl-AMP (TC-AMP) to the N6 group of A37, together with TsaE and TsaB. TsaD likely plays a direct catalytic role in this reaction.</text>
</comment>
<comment type="catalytic activity">
    <reaction evidence="1">
        <text>L-threonylcarbamoyladenylate + adenosine(37) in tRNA = N(6)-L-threonylcarbamoyladenosine(37) in tRNA + AMP + H(+)</text>
        <dbReference type="Rhea" id="RHEA:37059"/>
        <dbReference type="Rhea" id="RHEA-COMP:10162"/>
        <dbReference type="Rhea" id="RHEA-COMP:10163"/>
        <dbReference type="ChEBI" id="CHEBI:15378"/>
        <dbReference type="ChEBI" id="CHEBI:73682"/>
        <dbReference type="ChEBI" id="CHEBI:74411"/>
        <dbReference type="ChEBI" id="CHEBI:74418"/>
        <dbReference type="ChEBI" id="CHEBI:456215"/>
        <dbReference type="EC" id="2.3.1.234"/>
    </reaction>
</comment>
<comment type="cofactor">
    <cofactor evidence="1">
        <name>Fe(2+)</name>
        <dbReference type="ChEBI" id="CHEBI:29033"/>
    </cofactor>
    <text evidence="1">Binds 1 Fe(2+) ion per subunit.</text>
</comment>
<comment type="subcellular location">
    <subcellularLocation>
        <location evidence="1">Cytoplasm</location>
    </subcellularLocation>
</comment>
<comment type="similarity">
    <text evidence="1">Belongs to the KAE1 / TsaD family.</text>
</comment>
<name>TSAD_ARTS2</name>
<feature type="chain" id="PRO_0000303258" description="tRNA N6-adenosine threonylcarbamoyltransferase">
    <location>
        <begin position="1"/>
        <end position="356"/>
    </location>
</feature>
<feature type="binding site" evidence="1">
    <location>
        <position position="115"/>
    </location>
    <ligand>
        <name>Fe cation</name>
        <dbReference type="ChEBI" id="CHEBI:24875"/>
    </ligand>
</feature>
<feature type="binding site" evidence="1">
    <location>
        <position position="119"/>
    </location>
    <ligand>
        <name>Fe cation</name>
        <dbReference type="ChEBI" id="CHEBI:24875"/>
    </ligand>
</feature>
<feature type="binding site" evidence="1">
    <location>
        <begin position="139"/>
        <end position="143"/>
    </location>
    <ligand>
        <name>substrate</name>
    </ligand>
</feature>
<feature type="binding site" evidence="1">
    <location>
        <position position="173"/>
    </location>
    <ligand>
        <name>substrate</name>
    </ligand>
</feature>
<feature type="binding site" evidence="1">
    <location>
        <position position="186"/>
    </location>
    <ligand>
        <name>substrate</name>
    </ligand>
</feature>
<feature type="binding site" evidence="1">
    <location>
        <position position="190"/>
    </location>
    <ligand>
        <name>substrate</name>
    </ligand>
</feature>
<feature type="binding site" evidence="1">
    <location>
        <position position="291"/>
    </location>
    <ligand>
        <name>substrate</name>
    </ligand>
</feature>
<feature type="binding site" evidence="1">
    <location>
        <position position="319"/>
    </location>
    <ligand>
        <name>Fe cation</name>
        <dbReference type="ChEBI" id="CHEBI:24875"/>
    </ligand>
</feature>
<keyword id="KW-0012">Acyltransferase</keyword>
<keyword id="KW-0963">Cytoplasm</keyword>
<keyword id="KW-0408">Iron</keyword>
<keyword id="KW-0479">Metal-binding</keyword>
<keyword id="KW-1185">Reference proteome</keyword>
<keyword id="KW-0808">Transferase</keyword>
<keyword id="KW-0819">tRNA processing</keyword>
<organism>
    <name type="scientific">Arthrobacter sp. (strain FB24)</name>
    <dbReference type="NCBI Taxonomy" id="290399"/>
    <lineage>
        <taxon>Bacteria</taxon>
        <taxon>Bacillati</taxon>
        <taxon>Actinomycetota</taxon>
        <taxon>Actinomycetes</taxon>
        <taxon>Micrococcales</taxon>
        <taxon>Micrococcaceae</taxon>
        <taxon>Arthrobacter</taxon>
    </lineage>
</organism>
<gene>
    <name evidence="1" type="primary">tsaD</name>
    <name type="synonym">gcp</name>
    <name type="ordered locus">Arth_2892</name>
</gene>
<dbReference type="EC" id="2.3.1.234" evidence="1"/>
<dbReference type="EMBL" id="CP000454">
    <property type="protein sequence ID" value="ABK04271.1"/>
    <property type="molecule type" value="Genomic_DNA"/>
</dbReference>
<dbReference type="RefSeq" id="WP_011692730.1">
    <property type="nucleotide sequence ID" value="NC_008541.1"/>
</dbReference>
<dbReference type="SMR" id="A0JZ01"/>
<dbReference type="STRING" id="290399.Arth_2892"/>
<dbReference type="KEGG" id="art:Arth_2892"/>
<dbReference type="eggNOG" id="COG0533">
    <property type="taxonomic scope" value="Bacteria"/>
</dbReference>
<dbReference type="HOGENOM" id="CLU_023208_0_2_11"/>
<dbReference type="OrthoDB" id="9806197at2"/>
<dbReference type="Proteomes" id="UP000000754">
    <property type="component" value="Chromosome"/>
</dbReference>
<dbReference type="GO" id="GO:0005737">
    <property type="term" value="C:cytoplasm"/>
    <property type="evidence" value="ECO:0007669"/>
    <property type="project" value="UniProtKB-SubCell"/>
</dbReference>
<dbReference type="GO" id="GO:0005506">
    <property type="term" value="F:iron ion binding"/>
    <property type="evidence" value="ECO:0007669"/>
    <property type="project" value="UniProtKB-UniRule"/>
</dbReference>
<dbReference type="GO" id="GO:0061711">
    <property type="term" value="F:N(6)-L-threonylcarbamoyladenine synthase activity"/>
    <property type="evidence" value="ECO:0007669"/>
    <property type="project" value="UniProtKB-EC"/>
</dbReference>
<dbReference type="GO" id="GO:0002949">
    <property type="term" value="P:tRNA threonylcarbamoyladenosine modification"/>
    <property type="evidence" value="ECO:0007669"/>
    <property type="project" value="UniProtKB-UniRule"/>
</dbReference>
<dbReference type="CDD" id="cd24133">
    <property type="entry name" value="ASKHA_NBD_TsaD_bac"/>
    <property type="match status" value="1"/>
</dbReference>
<dbReference type="FunFam" id="3.30.420.40:FF:000012">
    <property type="entry name" value="tRNA N6-adenosine threonylcarbamoyltransferase"/>
    <property type="match status" value="1"/>
</dbReference>
<dbReference type="FunFam" id="3.30.420.40:FF:000040">
    <property type="entry name" value="tRNA N6-adenosine threonylcarbamoyltransferase"/>
    <property type="match status" value="1"/>
</dbReference>
<dbReference type="Gene3D" id="3.30.420.40">
    <property type="match status" value="2"/>
</dbReference>
<dbReference type="HAMAP" id="MF_01445">
    <property type="entry name" value="TsaD"/>
    <property type="match status" value="1"/>
</dbReference>
<dbReference type="InterPro" id="IPR043129">
    <property type="entry name" value="ATPase_NBD"/>
</dbReference>
<dbReference type="InterPro" id="IPR000905">
    <property type="entry name" value="Gcp-like_dom"/>
</dbReference>
<dbReference type="InterPro" id="IPR017861">
    <property type="entry name" value="KAE1/TsaD"/>
</dbReference>
<dbReference type="InterPro" id="IPR022450">
    <property type="entry name" value="TsaD"/>
</dbReference>
<dbReference type="NCBIfam" id="TIGR00329">
    <property type="entry name" value="gcp_kae1"/>
    <property type="match status" value="1"/>
</dbReference>
<dbReference type="NCBIfam" id="TIGR03723">
    <property type="entry name" value="T6A_TsaD_YgjD"/>
    <property type="match status" value="1"/>
</dbReference>
<dbReference type="PANTHER" id="PTHR11735">
    <property type="entry name" value="TRNA N6-ADENOSINE THREONYLCARBAMOYLTRANSFERASE"/>
    <property type="match status" value="1"/>
</dbReference>
<dbReference type="PANTHER" id="PTHR11735:SF6">
    <property type="entry name" value="TRNA N6-ADENOSINE THREONYLCARBAMOYLTRANSFERASE, MITOCHONDRIAL"/>
    <property type="match status" value="1"/>
</dbReference>
<dbReference type="Pfam" id="PF00814">
    <property type="entry name" value="TsaD"/>
    <property type="match status" value="1"/>
</dbReference>
<dbReference type="PRINTS" id="PR00789">
    <property type="entry name" value="OSIALOPTASE"/>
</dbReference>
<dbReference type="SUPFAM" id="SSF53067">
    <property type="entry name" value="Actin-like ATPase domain"/>
    <property type="match status" value="1"/>
</dbReference>